<protein>
    <recommendedName>
        <fullName evidence="1">Segregation and condensation protein A</fullName>
    </recommendedName>
</protein>
<name>SCPA_BREBN</name>
<sequence>MAYSIKLDSFEGPLDLLLHLIDKAEVDIYDIPVAEITEQYLATIDKMQELQLDVASEFVVMAATLLSIKSKMLLPKKEEHVFQQFLDMDVDEIDPREELVARLLEYKRYKMLAENLREMEIGRNQVFTRPAENLSPYVREEDHTVTNVTLYDLINALEKLVKKTKEKEPMTTVSRDEISIKDRMTEIRQAVRSGGMVRFSELFTQGATRTEIVTTFLALLELMKAKHITCVQNQLFQDIIICENGTEGAHTDGL</sequence>
<dbReference type="EMBL" id="AP008955">
    <property type="protein sequence ID" value="BAH43385.1"/>
    <property type="molecule type" value="Genomic_DNA"/>
</dbReference>
<dbReference type="RefSeq" id="WP_012686097.1">
    <property type="nucleotide sequence ID" value="NC_012491.1"/>
</dbReference>
<dbReference type="SMR" id="C0ZC76"/>
<dbReference type="STRING" id="358681.BBR47_24080"/>
<dbReference type="KEGG" id="bbe:BBR47_24080"/>
<dbReference type="eggNOG" id="COG1354">
    <property type="taxonomic scope" value="Bacteria"/>
</dbReference>
<dbReference type="HOGENOM" id="CLU_038686_3_1_9"/>
<dbReference type="Proteomes" id="UP000001877">
    <property type="component" value="Chromosome"/>
</dbReference>
<dbReference type="GO" id="GO:0005737">
    <property type="term" value="C:cytoplasm"/>
    <property type="evidence" value="ECO:0007669"/>
    <property type="project" value="UniProtKB-SubCell"/>
</dbReference>
<dbReference type="GO" id="GO:0051301">
    <property type="term" value="P:cell division"/>
    <property type="evidence" value="ECO:0007669"/>
    <property type="project" value="UniProtKB-KW"/>
</dbReference>
<dbReference type="GO" id="GO:0007059">
    <property type="term" value="P:chromosome segregation"/>
    <property type="evidence" value="ECO:0007669"/>
    <property type="project" value="UniProtKB-UniRule"/>
</dbReference>
<dbReference type="GO" id="GO:0006260">
    <property type="term" value="P:DNA replication"/>
    <property type="evidence" value="ECO:0007669"/>
    <property type="project" value="UniProtKB-UniRule"/>
</dbReference>
<dbReference type="Gene3D" id="6.10.250.2410">
    <property type="match status" value="1"/>
</dbReference>
<dbReference type="Gene3D" id="1.10.10.580">
    <property type="entry name" value="Structural maintenance of chromosome 1. Chain E"/>
    <property type="match status" value="1"/>
</dbReference>
<dbReference type="HAMAP" id="MF_01805">
    <property type="entry name" value="ScpA"/>
    <property type="match status" value="1"/>
</dbReference>
<dbReference type="InterPro" id="IPR003768">
    <property type="entry name" value="ScpA"/>
</dbReference>
<dbReference type="InterPro" id="IPR023093">
    <property type="entry name" value="ScpA-like_C"/>
</dbReference>
<dbReference type="PANTHER" id="PTHR33969">
    <property type="entry name" value="SEGREGATION AND CONDENSATION PROTEIN A"/>
    <property type="match status" value="1"/>
</dbReference>
<dbReference type="PANTHER" id="PTHR33969:SF2">
    <property type="entry name" value="SEGREGATION AND CONDENSATION PROTEIN A"/>
    <property type="match status" value="1"/>
</dbReference>
<dbReference type="Pfam" id="PF02616">
    <property type="entry name" value="SMC_ScpA"/>
    <property type="match status" value="1"/>
</dbReference>
<keyword id="KW-0131">Cell cycle</keyword>
<keyword id="KW-0132">Cell division</keyword>
<keyword id="KW-0159">Chromosome partition</keyword>
<keyword id="KW-0963">Cytoplasm</keyword>
<keyword id="KW-1185">Reference proteome</keyword>
<feature type="chain" id="PRO_1000187557" description="Segregation and condensation protein A">
    <location>
        <begin position="1"/>
        <end position="254"/>
    </location>
</feature>
<gene>
    <name evidence="1" type="primary">scpA</name>
    <name type="ordered locus">BBR47_24080</name>
</gene>
<organism>
    <name type="scientific">Brevibacillus brevis (strain 47 / JCM 6285 / NBRC 100599)</name>
    <dbReference type="NCBI Taxonomy" id="358681"/>
    <lineage>
        <taxon>Bacteria</taxon>
        <taxon>Bacillati</taxon>
        <taxon>Bacillota</taxon>
        <taxon>Bacilli</taxon>
        <taxon>Bacillales</taxon>
        <taxon>Paenibacillaceae</taxon>
        <taxon>Brevibacillus</taxon>
    </lineage>
</organism>
<proteinExistence type="inferred from homology"/>
<reference key="1">
    <citation type="submission" date="2005-03" db="EMBL/GenBank/DDBJ databases">
        <title>Brevibacillus brevis strain 47, complete genome.</title>
        <authorList>
            <person name="Hosoyama A."/>
            <person name="Yamada R."/>
            <person name="Hongo Y."/>
            <person name="Terui Y."/>
            <person name="Ankai A."/>
            <person name="Masuyama W."/>
            <person name="Sekiguchi M."/>
            <person name="Takeda T."/>
            <person name="Asano K."/>
            <person name="Ohji S."/>
            <person name="Ichikawa N."/>
            <person name="Narita S."/>
            <person name="Aoki N."/>
            <person name="Miura H."/>
            <person name="Matsushita S."/>
            <person name="Sekigawa T."/>
            <person name="Yamagata H."/>
            <person name="Yoshikawa H."/>
            <person name="Udaka S."/>
            <person name="Tanikawa S."/>
            <person name="Fujita N."/>
        </authorList>
    </citation>
    <scope>NUCLEOTIDE SEQUENCE [LARGE SCALE GENOMIC DNA]</scope>
    <source>
        <strain>47 / JCM 6285 / NBRC 100599</strain>
    </source>
</reference>
<accession>C0ZC76</accession>
<comment type="function">
    <text evidence="1">Participates in chromosomal partition during cell division. May act via the formation of a condensin-like complex containing Smc and ScpB that pull DNA away from mid-cell into both cell halves.</text>
</comment>
<comment type="subunit">
    <text evidence="1">Component of a cohesin-like complex composed of ScpA, ScpB and the Smc homodimer, in which ScpA and ScpB bind to the head domain of Smc. The presence of the three proteins is required for the association of the complex with DNA.</text>
</comment>
<comment type="subcellular location">
    <subcellularLocation>
        <location evidence="1">Cytoplasm</location>
    </subcellularLocation>
    <text evidence="1">Associated with two foci at the outer edges of the nucleoid region in young cells, and at four foci within both cell halves in older cells.</text>
</comment>
<comment type="similarity">
    <text evidence="1">Belongs to the ScpA family.</text>
</comment>
<evidence type="ECO:0000255" key="1">
    <source>
        <dbReference type="HAMAP-Rule" id="MF_01805"/>
    </source>
</evidence>